<keyword id="KW-0413">Isomerase</keyword>
<keyword id="KW-0614">Plasmid</keyword>
<keyword id="KW-0663">Pyridoxal phosphate</keyword>
<name>ALR3_RHILO</name>
<gene>
    <name type="primary">alr3</name>
    <name type="ordered locus">mlr9371</name>
</gene>
<proteinExistence type="inferred from homology"/>
<dbReference type="EC" id="5.1.1.1" evidence="1"/>
<dbReference type="EMBL" id="BA000013">
    <property type="protein sequence ID" value="BAB54978.1"/>
    <property type="molecule type" value="Genomic_DNA"/>
</dbReference>
<dbReference type="SMR" id="Q981H7"/>
<dbReference type="KEGG" id="mlo:mlr9371"/>
<dbReference type="PATRIC" id="fig|266835.9.peg.7136"/>
<dbReference type="HOGENOM" id="CLU_028393_1_1_5"/>
<dbReference type="UniPathway" id="UPA00042">
    <property type="reaction ID" value="UER00497"/>
</dbReference>
<dbReference type="Proteomes" id="UP000000552">
    <property type="component" value="Plasmid pMLa"/>
</dbReference>
<dbReference type="GO" id="GO:0005829">
    <property type="term" value="C:cytosol"/>
    <property type="evidence" value="ECO:0007669"/>
    <property type="project" value="TreeGrafter"/>
</dbReference>
<dbReference type="GO" id="GO:0008784">
    <property type="term" value="F:alanine racemase activity"/>
    <property type="evidence" value="ECO:0007669"/>
    <property type="project" value="UniProtKB-UniRule"/>
</dbReference>
<dbReference type="GO" id="GO:0030170">
    <property type="term" value="F:pyridoxal phosphate binding"/>
    <property type="evidence" value="ECO:0007669"/>
    <property type="project" value="UniProtKB-UniRule"/>
</dbReference>
<dbReference type="GO" id="GO:0030632">
    <property type="term" value="P:D-alanine biosynthetic process"/>
    <property type="evidence" value="ECO:0007669"/>
    <property type="project" value="UniProtKB-UniRule"/>
</dbReference>
<dbReference type="CDD" id="cd00430">
    <property type="entry name" value="PLPDE_III_AR"/>
    <property type="match status" value="1"/>
</dbReference>
<dbReference type="Gene3D" id="3.20.20.10">
    <property type="entry name" value="Alanine racemase"/>
    <property type="match status" value="1"/>
</dbReference>
<dbReference type="Gene3D" id="2.40.37.10">
    <property type="entry name" value="Lyase, Ornithine Decarboxylase, Chain A, domain 1"/>
    <property type="match status" value="1"/>
</dbReference>
<dbReference type="HAMAP" id="MF_01201">
    <property type="entry name" value="Ala_racemase"/>
    <property type="match status" value="1"/>
</dbReference>
<dbReference type="InterPro" id="IPR000821">
    <property type="entry name" value="Ala_racemase"/>
</dbReference>
<dbReference type="InterPro" id="IPR009006">
    <property type="entry name" value="Ala_racemase/Decarboxylase_C"/>
</dbReference>
<dbReference type="InterPro" id="IPR011079">
    <property type="entry name" value="Ala_racemase_C"/>
</dbReference>
<dbReference type="InterPro" id="IPR001608">
    <property type="entry name" value="Ala_racemase_N"/>
</dbReference>
<dbReference type="InterPro" id="IPR020622">
    <property type="entry name" value="Ala_racemase_pyridoxalP-BS"/>
</dbReference>
<dbReference type="InterPro" id="IPR029066">
    <property type="entry name" value="PLP-binding_barrel"/>
</dbReference>
<dbReference type="NCBIfam" id="TIGR00492">
    <property type="entry name" value="alr"/>
    <property type="match status" value="1"/>
</dbReference>
<dbReference type="PANTHER" id="PTHR30511">
    <property type="entry name" value="ALANINE RACEMASE"/>
    <property type="match status" value="1"/>
</dbReference>
<dbReference type="PANTHER" id="PTHR30511:SF0">
    <property type="entry name" value="ALANINE RACEMASE, CATABOLIC-RELATED"/>
    <property type="match status" value="1"/>
</dbReference>
<dbReference type="Pfam" id="PF00842">
    <property type="entry name" value="Ala_racemase_C"/>
    <property type="match status" value="1"/>
</dbReference>
<dbReference type="Pfam" id="PF01168">
    <property type="entry name" value="Ala_racemase_N"/>
    <property type="match status" value="1"/>
</dbReference>
<dbReference type="PRINTS" id="PR00992">
    <property type="entry name" value="ALARACEMASE"/>
</dbReference>
<dbReference type="SMART" id="SM01005">
    <property type="entry name" value="Ala_racemase_C"/>
    <property type="match status" value="1"/>
</dbReference>
<dbReference type="SUPFAM" id="SSF50621">
    <property type="entry name" value="Alanine racemase C-terminal domain-like"/>
    <property type="match status" value="1"/>
</dbReference>
<dbReference type="SUPFAM" id="SSF51419">
    <property type="entry name" value="PLP-binding barrel"/>
    <property type="match status" value="1"/>
</dbReference>
<dbReference type="PROSITE" id="PS00395">
    <property type="entry name" value="ALANINE_RACEMASE"/>
    <property type="match status" value="1"/>
</dbReference>
<feature type="chain" id="PRO_0000114553" description="Alanine racemase 3">
    <location>
        <begin position="1"/>
        <end position="388"/>
    </location>
</feature>
<feature type="active site" description="Proton acceptor; specific for D-alanine" evidence="1">
    <location>
        <position position="41"/>
    </location>
</feature>
<feature type="active site" description="Proton acceptor; specific for L-alanine" evidence="1">
    <location>
        <position position="256"/>
    </location>
</feature>
<feature type="binding site" evidence="1">
    <location>
        <position position="135"/>
    </location>
    <ligand>
        <name>substrate</name>
    </ligand>
</feature>
<feature type="binding site" evidence="1">
    <location>
        <position position="304"/>
    </location>
    <ligand>
        <name>substrate</name>
    </ligand>
</feature>
<feature type="modified residue" description="N6-(pyridoxal phosphate)lysine" evidence="1">
    <location>
        <position position="41"/>
    </location>
</feature>
<geneLocation type="plasmid">
    <name>pMLa</name>
</geneLocation>
<reference key="1">
    <citation type="journal article" date="2000" name="DNA Res.">
        <title>Complete genome structure of the nitrogen-fixing symbiotic bacterium Mesorhizobium loti.</title>
        <authorList>
            <person name="Kaneko T."/>
            <person name="Nakamura Y."/>
            <person name="Sato S."/>
            <person name="Asamizu E."/>
            <person name="Kato T."/>
            <person name="Sasamoto S."/>
            <person name="Watanabe A."/>
            <person name="Idesawa K."/>
            <person name="Ishikawa A."/>
            <person name="Kawashima K."/>
            <person name="Kimura T."/>
            <person name="Kishida Y."/>
            <person name="Kiyokawa C."/>
            <person name="Kohara M."/>
            <person name="Matsumoto M."/>
            <person name="Matsuno A."/>
            <person name="Mochizuki Y."/>
            <person name="Nakayama S."/>
            <person name="Nakazaki N."/>
            <person name="Shimpo S."/>
            <person name="Sugimoto M."/>
            <person name="Takeuchi C."/>
            <person name="Yamada M."/>
            <person name="Tabata S."/>
        </authorList>
    </citation>
    <scope>NUCLEOTIDE SEQUENCE [LARGE SCALE GENOMIC DNA]</scope>
    <source>
        <strain>LMG 29417 / CECT 9101 / MAFF 303099</strain>
    </source>
</reference>
<protein>
    <recommendedName>
        <fullName evidence="1">Alanine racemase 3</fullName>
        <ecNumber evidence="1">5.1.1.1</ecNumber>
    </recommendedName>
</protein>
<sequence>MLTSVRPADVVLEIDLSAIQANFQTISALVGPQVRVAAVVKSDAYGLGLVKVAGALIDAGCDLLFVGNLHEALLLRSSHISAAVAVFCDEFARYGEHYRSNGLIPVVNNSVELDAICGAREPQAYFLNVETGLSRLGLAFDDVRRRYLGGIFKRRPPSVVLSHLACSERAGDAMNLLQWNRFRATSDLLKPTLLSLAASAGVWLGKRYHFDMVRVGSALYGLNSAGIRPNPLKPVVGVKAKTLDARNVARSEAVGYGATFRTGRASRLAIAGIGYKHGLPWACANKISVRFAGYSAPLVGRVSMEYITIDVTDVPEALCGPGTNVELLSDDFTVDDLAASAGVHPQEVLTRLGVGCARQYLDGSSASAGFPGNLTNAGPGHDPRAILG</sequence>
<accession>Q981H7</accession>
<evidence type="ECO:0000255" key="1">
    <source>
        <dbReference type="HAMAP-Rule" id="MF_01201"/>
    </source>
</evidence>
<organism>
    <name type="scientific">Mesorhizobium japonicum (strain LMG 29417 / CECT 9101 / MAFF 303099)</name>
    <name type="common">Mesorhizobium loti (strain MAFF 303099)</name>
    <dbReference type="NCBI Taxonomy" id="266835"/>
    <lineage>
        <taxon>Bacteria</taxon>
        <taxon>Pseudomonadati</taxon>
        <taxon>Pseudomonadota</taxon>
        <taxon>Alphaproteobacteria</taxon>
        <taxon>Hyphomicrobiales</taxon>
        <taxon>Phyllobacteriaceae</taxon>
        <taxon>Mesorhizobium</taxon>
    </lineage>
</organism>
<comment type="function">
    <text evidence="1">Catalyzes the interconversion of L-alanine and D-alanine. May also act on other amino acids.</text>
</comment>
<comment type="catalytic activity">
    <reaction evidence="1">
        <text>L-alanine = D-alanine</text>
        <dbReference type="Rhea" id="RHEA:20249"/>
        <dbReference type="ChEBI" id="CHEBI:57416"/>
        <dbReference type="ChEBI" id="CHEBI:57972"/>
        <dbReference type="EC" id="5.1.1.1"/>
    </reaction>
</comment>
<comment type="cofactor">
    <cofactor evidence="1">
        <name>pyridoxal 5'-phosphate</name>
        <dbReference type="ChEBI" id="CHEBI:597326"/>
    </cofactor>
</comment>
<comment type="pathway">
    <text evidence="1">Amino-acid biosynthesis; D-alanine biosynthesis; D-alanine from L-alanine: step 1/1.</text>
</comment>
<comment type="similarity">
    <text evidence="1">Belongs to the alanine racemase family.</text>
</comment>